<gene>
    <name evidence="1" type="primary">ATbp</name>
    <name type="ORF">GK25708</name>
</gene>
<reference evidence="5" key="1">
    <citation type="journal article" date="2007" name="Nature">
        <title>Evolution of genes and genomes on the Drosophila phylogeny.</title>
        <authorList>
            <consortium name="Drosophila 12 genomes consortium"/>
        </authorList>
    </citation>
    <scope>NUCLEOTIDE SEQUENCE [LARGE SCALE GENOMIC DNA]</scope>
    <source>
        <strain evidence="5">Tucson 14030-0811.24</strain>
    </source>
</reference>
<keyword id="KW-0238">DNA-binding</keyword>
<keyword id="KW-0479">Metal-binding</keyword>
<keyword id="KW-0539">Nucleus</keyword>
<keyword id="KW-1185">Reference proteome</keyword>
<keyword id="KW-0677">Repeat</keyword>
<keyword id="KW-0804">Transcription</keyword>
<keyword id="KW-0805">Transcription regulation</keyword>
<keyword id="KW-0862">Zinc</keyword>
<keyword id="KW-0863">Zinc-finger</keyword>
<comment type="function">
    <text evidence="1">May be a transcription factor for genes having (A+T) stretches in their promoter and/or enhancer regions. Binds to AT rich DNA (By similarity).</text>
</comment>
<comment type="subcellular location">
    <subcellularLocation>
        <location evidence="1">Nucleus</location>
    </subcellularLocation>
</comment>
<comment type="sequence caution" evidence="4">
    <conflict type="erroneous gene model prediction">
        <sequence resource="EMBL-CDS" id="EDW82267"/>
    </conflict>
</comment>
<proteinExistence type="inferred from homology"/>
<evidence type="ECO:0000250" key="1">
    <source>
        <dbReference type="UniProtKB" id="Q86P48"/>
    </source>
</evidence>
<evidence type="ECO:0000255" key="2">
    <source>
        <dbReference type="PROSITE-ProRule" id="PRU00042"/>
    </source>
</evidence>
<evidence type="ECO:0000256" key="3">
    <source>
        <dbReference type="SAM" id="MobiDB-lite"/>
    </source>
</evidence>
<evidence type="ECO:0000305" key="4"/>
<evidence type="ECO:0000312" key="5">
    <source>
        <dbReference type="EMBL" id="EDW82267.1"/>
    </source>
</evidence>
<feature type="chain" id="PRO_0000378618" description="AT-rich binding protein">
    <location>
        <begin position="1"/>
        <end position="379"/>
    </location>
</feature>
<feature type="zinc finger region" description="C2H2-type 1" evidence="2">
    <location>
        <begin position="29"/>
        <end position="52"/>
    </location>
</feature>
<feature type="zinc finger region" description="C2H2-type 2" evidence="2">
    <location>
        <begin position="312"/>
        <end position="336"/>
    </location>
</feature>
<feature type="zinc finger region" description="C2H2-type 3" evidence="2">
    <location>
        <begin position="342"/>
        <end position="365"/>
    </location>
</feature>
<feature type="region of interest" description="Disordered" evidence="3">
    <location>
        <begin position="114"/>
        <end position="148"/>
    </location>
</feature>
<feature type="region of interest" description="Disordered" evidence="3">
    <location>
        <begin position="221"/>
        <end position="267"/>
    </location>
</feature>
<feature type="compositionally biased region" description="Basic and acidic residues" evidence="3">
    <location>
        <begin position="114"/>
        <end position="124"/>
    </location>
</feature>
<feature type="compositionally biased region" description="Low complexity" evidence="3">
    <location>
        <begin position="125"/>
        <end position="143"/>
    </location>
</feature>
<feature type="compositionally biased region" description="Low complexity" evidence="3">
    <location>
        <begin position="223"/>
        <end position="242"/>
    </location>
</feature>
<feature type="compositionally biased region" description="Low complexity" evidence="3">
    <location>
        <begin position="249"/>
        <end position="262"/>
    </location>
</feature>
<protein>
    <recommendedName>
        <fullName evidence="1">AT-rich binding protein</fullName>
    </recommendedName>
</protein>
<accession>B4NEU8</accession>
<sequence length="379" mass="41027">MGFPRILSKNNKIYTKLGEFCLSGDSFWIVCHTCQEELQTQDQFWKHIQDEHNFLHGVAKEHSRTSSYCLTDVEAAAAATTPGATASSQGAGSVTAVTVPLALYHCSAKYSDDEQREVELHEAHQQQQQQQQQQLHQQQQQQQRDAAKELAELHANAVAAAAAVAAASDGSARSSSGIDIKVEPATLALPPDMQAAAAAAAAANATIYHLPQLVPAPAPPPTASFVSASGGSTSTTVSTTPPSHQPIMQQQQHQQQQQQQQQTSTTLAMSVNQSTAIAAAALLTGPDLPKDSNSTTASAGSAVSSDDGERWYICDYESCGLKFKYKSRMELHRVVHSKERRFNCDLCSASFKQSCNLSTHRKKKHAMRGIKSELLPQRF</sequence>
<organism>
    <name type="scientific">Drosophila willistoni</name>
    <name type="common">Fruit fly</name>
    <dbReference type="NCBI Taxonomy" id="7260"/>
    <lineage>
        <taxon>Eukaryota</taxon>
        <taxon>Metazoa</taxon>
        <taxon>Ecdysozoa</taxon>
        <taxon>Arthropoda</taxon>
        <taxon>Hexapoda</taxon>
        <taxon>Insecta</taxon>
        <taxon>Pterygota</taxon>
        <taxon>Neoptera</taxon>
        <taxon>Endopterygota</taxon>
        <taxon>Diptera</taxon>
        <taxon>Brachycera</taxon>
        <taxon>Muscomorpha</taxon>
        <taxon>Ephydroidea</taxon>
        <taxon>Drosophilidae</taxon>
        <taxon>Drosophila</taxon>
        <taxon>Sophophora</taxon>
    </lineage>
</organism>
<name>ATBP_DROWI</name>
<dbReference type="EMBL" id="CH964239">
    <property type="protein sequence ID" value="EDW82267.1"/>
    <property type="status" value="ALT_SEQ"/>
    <property type="molecule type" value="Genomic_DNA"/>
</dbReference>
<dbReference type="RefSeq" id="XP_002071281.2">
    <property type="nucleotide sequence ID" value="XM_002071245.2"/>
</dbReference>
<dbReference type="SMR" id="B4NEU8"/>
<dbReference type="EnsemblMetazoa" id="XM_023179260.2">
    <property type="protein sequence ID" value="XP_023035028.1"/>
    <property type="gene ID" value="LOC26529145"/>
</dbReference>
<dbReference type="eggNOG" id="KOG0819">
    <property type="taxonomic scope" value="Eukaryota"/>
</dbReference>
<dbReference type="eggNOG" id="KOG1721">
    <property type="taxonomic scope" value="Eukaryota"/>
</dbReference>
<dbReference type="OrthoDB" id="37886at2759"/>
<dbReference type="Proteomes" id="UP000007798">
    <property type="component" value="Unassembled WGS sequence"/>
</dbReference>
<dbReference type="GO" id="GO:0005634">
    <property type="term" value="C:nucleus"/>
    <property type="evidence" value="ECO:0007669"/>
    <property type="project" value="UniProtKB-SubCell"/>
</dbReference>
<dbReference type="GO" id="GO:0003700">
    <property type="term" value="F:DNA-binding transcription factor activity"/>
    <property type="evidence" value="ECO:0007669"/>
    <property type="project" value="TreeGrafter"/>
</dbReference>
<dbReference type="GO" id="GO:0000978">
    <property type="term" value="F:RNA polymerase II cis-regulatory region sequence-specific DNA binding"/>
    <property type="evidence" value="ECO:0007669"/>
    <property type="project" value="TreeGrafter"/>
</dbReference>
<dbReference type="GO" id="GO:0008270">
    <property type="term" value="F:zinc ion binding"/>
    <property type="evidence" value="ECO:0007669"/>
    <property type="project" value="UniProtKB-KW"/>
</dbReference>
<dbReference type="GO" id="GO:0006357">
    <property type="term" value="P:regulation of transcription by RNA polymerase II"/>
    <property type="evidence" value="ECO:0000250"/>
    <property type="project" value="UniProtKB"/>
</dbReference>
<dbReference type="Gene3D" id="3.30.160.60">
    <property type="entry name" value="Classic Zinc Finger"/>
    <property type="match status" value="2"/>
</dbReference>
<dbReference type="InterPro" id="IPR051497">
    <property type="entry name" value="Dev/Hematopoietic_TF"/>
</dbReference>
<dbReference type="InterPro" id="IPR036236">
    <property type="entry name" value="Znf_C2H2_sf"/>
</dbReference>
<dbReference type="InterPro" id="IPR013087">
    <property type="entry name" value="Znf_C2H2_type"/>
</dbReference>
<dbReference type="PANTHER" id="PTHR45993">
    <property type="entry name" value="B-CELL LYMPHOMA/LEUKEMIA 11"/>
    <property type="match status" value="1"/>
</dbReference>
<dbReference type="PANTHER" id="PTHR45993:SF6">
    <property type="entry name" value="C2H2-TYPE DOMAIN-CONTAINING PROTEIN"/>
    <property type="match status" value="1"/>
</dbReference>
<dbReference type="SMART" id="SM00355">
    <property type="entry name" value="ZnF_C2H2"/>
    <property type="match status" value="3"/>
</dbReference>
<dbReference type="SUPFAM" id="SSF57667">
    <property type="entry name" value="beta-beta-alpha zinc fingers"/>
    <property type="match status" value="1"/>
</dbReference>
<dbReference type="PROSITE" id="PS00028">
    <property type="entry name" value="ZINC_FINGER_C2H2_1"/>
    <property type="match status" value="3"/>
</dbReference>
<dbReference type="PROSITE" id="PS50157">
    <property type="entry name" value="ZINC_FINGER_C2H2_2"/>
    <property type="match status" value="2"/>
</dbReference>